<organism>
    <name type="scientific">Rattus norvegicus</name>
    <name type="common">Rat</name>
    <dbReference type="NCBI Taxonomy" id="10116"/>
    <lineage>
        <taxon>Eukaryota</taxon>
        <taxon>Metazoa</taxon>
        <taxon>Chordata</taxon>
        <taxon>Craniata</taxon>
        <taxon>Vertebrata</taxon>
        <taxon>Euteleostomi</taxon>
        <taxon>Mammalia</taxon>
        <taxon>Eutheria</taxon>
        <taxon>Euarchontoglires</taxon>
        <taxon>Glires</taxon>
        <taxon>Rodentia</taxon>
        <taxon>Myomorpha</taxon>
        <taxon>Muroidea</taxon>
        <taxon>Muridae</taxon>
        <taxon>Murinae</taxon>
        <taxon>Rattus</taxon>
    </lineage>
</organism>
<dbReference type="EMBL" id="HM125534">
    <property type="protein sequence ID" value="ADK94117.1"/>
    <property type="molecule type" value="mRNA"/>
</dbReference>
<dbReference type="EMBL" id="AABR07071764">
    <property type="status" value="NOT_ANNOTATED_CDS"/>
    <property type="molecule type" value="Genomic_DNA"/>
</dbReference>
<dbReference type="EMBL" id="CH473954">
    <property type="protein sequence ID" value="EDL76834.1"/>
    <property type="molecule type" value="Genomic_DNA"/>
</dbReference>
<dbReference type="EMBL" id="HG931781">
    <property type="protein sequence ID" value="CDM98782.1"/>
    <property type="molecule type" value="Genomic_DNA"/>
</dbReference>
<dbReference type="RefSeq" id="NP_001233112.1">
    <property type="nucleotide sequence ID" value="NM_001246183.2"/>
</dbReference>
<dbReference type="RefSeq" id="XP_006244187.1">
    <property type="nucleotide sequence ID" value="XM_006244125.5"/>
</dbReference>
<dbReference type="RefSeq" id="XP_038937744.1">
    <property type="nucleotide sequence ID" value="XM_039081816.2"/>
</dbReference>
<dbReference type="RefSeq" id="XP_063121923.1">
    <property type="nucleotide sequence ID" value="XM_063265853.1"/>
</dbReference>
<dbReference type="SMR" id="D4ABW7"/>
<dbReference type="FunCoup" id="D4ABW7">
    <property type="interactions" value="7"/>
</dbReference>
<dbReference type="STRING" id="10116.ENSRNOP00000026173"/>
<dbReference type="PhosphoSitePlus" id="D4ABW7"/>
<dbReference type="PaxDb" id="10116-ENSRNOP00000026173"/>
<dbReference type="Ensembl" id="ENSRNOT00000026173.7">
    <property type="protein sequence ID" value="ENSRNOP00000026173.4"/>
    <property type="gene ID" value="ENSRNOG00000019350.7"/>
</dbReference>
<dbReference type="GeneID" id="363168"/>
<dbReference type="KEGG" id="rno:363168"/>
<dbReference type="UCSC" id="RGD:1308401">
    <property type="organism name" value="rat"/>
</dbReference>
<dbReference type="AGR" id="RGD:1308401"/>
<dbReference type="CTD" id="131375"/>
<dbReference type="RGD" id="1308401">
    <property type="gene designation" value="Lyzl4"/>
</dbReference>
<dbReference type="eggNOG" id="ENOG502SSER">
    <property type="taxonomic scope" value="Eukaryota"/>
</dbReference>
<dbReference type="GeneTree" id="ENSGT00940000162293"/>
<dbReference type="HOGENOM" id="CLU_111620_1_1_1"/>
<dbReference type="InParanoid" id="D4ABW7"/>
<dbReference type="PhylomeDB" id="D4ABW7"/>
<dbReference type="TreeFam" id="TF324882"/>
<dbReference type="PRO" id="PR:D4ABW7"/>
<dbReference type="Proteomes" id="UP000002494">
    <property type="component" value="Chromosome 8"/>
</dbReference>
<dbReference type="Proteomes" id="UP000234681">
    <property type="component" value="Chromosome 8"/>
</dbReference>
<dbReference type="Bgee" id="ENSRNOG00000019350">
    <property type="expression patterns" value="Expressed in testis and 3 other cell types or tissues"/>
</dbReference>
<dbReference type="GO" id="GO:0001669">
    <property type="term" value="C:acrosomal vesicle"/>
    <property type="evidence" value="ECO:0000250"/>
    <property type="project" value="UniProtKB"/>
</dbReference>
<dbReference type="GO" id="GO:0005615">
    <property type="term" value="C:extracellular space"/>
    <property type="evidence" value="ECO:0000250"/>
    <property type="project" value="UniProtKB"/>
</dbReference>
<dbReference type="GO" id="GO:0036126">
    <property type="term" value="C:sperm flagellum"/>
    <property type="evidence" value="ECO:0000314"/>
    <property type="project" value="UniProtKB"/>
</dbReference>
<dbReference type="GO" id="GO:0009566">
    <property type="term" value="P:fertilization"/>
    <property type="evidence" value="ECO:0000250"/>
    <property type="project" value="UniProtKB"/>
</dbReference>
<dbReference type="GO" id="GO:0007342">
    <property type="term" value="P:fusion of sperm to egg plasma membrane involved in single fertilization"/>
    <property type="evidence" value="ECO:0000318"/>
    <property type="project" value="GO_Central"/>
</dbReference>
<dbReference type="CDD" id="cd16897">
    <property type="entry name" value="LYZ_C"/>
    <property type="match status" value="1"/>
</dbReference>
<dbReference type="FunFam" id="1.10.530.10:FF:000001">
    <property type="entry name" value="Lysozyme C"/>
    <property type="match status" value="1"/>
</dbReference>
<dbReference type="Gene3D" id="1.10.530.10">
    <property type="match status" value="1"/>
</dbReference>
<dbReference type="InterPro" id="IPR001916">
    <property type="entry name" value="Glyco_hydro_22"/>
</dbReference>
<dbReference type="InterPro" id="IPR019799">
    <property type="entry name" value="Glyco_hydro_22_CS"/>
</dbReference>
<dbReference type="InterPro" id="IPR000974">
    <property type="entry name" value="Glyco_hydro_22_lys"/>
</dbReference>
<dbReference type="InterPro" id="IPR023346">
    <property type="entry name" value="Lysozyme-like_dom_sf"/>
</dbReference>
<dbReference type="PANTHER" id="PTHR11407">
    <property type="entry name" value="LYSOZYME C"/>
    <property type="match status" value="1"/>
</dbReference>
<dbReference type="PANTHER" id="PTHR11407:SF21">
    <property type="entry name" value="LYSOZYME-LIKE PROTEIN 4"/>
    <property type="match status" value="1"/>
</dbReference>
<dbReference type="Pfam" id="PF00062">
    <property type="entry name" value="Lys"/>
    <property type="match status" value="1"/>
</dbReference>
<dbReference type="PRINTS" id="PR00137">
    <property type="entry name" value="LYSOZYME"/>
</dbReference>
<dbReference type="PRINTS" id="PR00135">
    <property type="entry name" value="LYZLACT"/>
</dbReference>
<dbReference type="SMART" id="SM00263">
    <property type="entry name" value="LYZ1"/>
    <property type="match status" value="1"/>
</dbReference>
<dbReference type="SUPFAM" id="SSF53955">
    <property type="entry name" value="Lysozyme-like"/>
    <property type="match status" value="1"/>
</dbReference>
<dbReference type="PROSITE" id="PS00128">
    <property type="entry name" value="GLYCOSYL_HYDROL_F22_1"/>
    <property type="match status" value="1"/>
</dbReference>
<dbReference type="PROSITE" id="PS51348">
    <property type="entry name" value="GLYCOSYL_HYDROL_F22_2"/>
    <property type="match status" value="1"/>
</dbReference>
<gene>
    <name type="primary">Lyzl4</name>
    <name evidence="5" type="synonym">Lyza</name>
</gene>
<sequence>MQLYLVLLLISYLLTPIGASILGRCVVAKKLYDGGLNYFEGYSLENWVCLAYFESKFNPSAVYENSRDGSTGFGLFQIRDNEWCDHGKNLCSVSCTALLNPNLKDTIECAKKIVKGKQGMGAWPVWSRNCQLSDILDRWLDGCEL</sequence>
<evidence type="ECO:0000250" key="1">
    <source>
        <dbReference type="UniProtKB" id="Q9D925"/>
    </source>
</evidence>
<evidence type="ECO:0000255" key="2"/>
<evidence type="ECO:0000255" key="3">
    <source>
        <dbReference type="PROSITE-ProRule" id="PRU00680"/>
    </source>
</evidence>
<evidence type="ECO:0000269" key="4">
    <source>
    </source>
</evidence>
<evidence type="ECO:0000303" key="5">
    <source>
    </source>
</evidence>
<evidence type="ECO:0000305" key="6"/>
<protein>
    <recommendedName>
        <fullName>Lysozyme-like protein 4</fullName>
        <shortName>Lysozyme-4</shortName>
    </recommendedName>
</protein>
<proteinExistence type="evidence at protein level"/>
<feature type="signal peptide" evidence="2">
    <location>
        <begin position="1"/>
        <end position="19"/>
    </location>
</feature>
<feature type="chain" id="PRO_5008161378" description="Lysozyme-like protein 4" evidence="2">
    <location>
        <begin position="20"/>
        <end position="145"/>
    </location>
</feature>
<feature type="domain" description="C-type lysozyme" evidence="3">
    <location>
        <begin position="20"/>
        <end position="145"/>
    </location>
</feature>
<feature type="active site" evidence="3">
    <location>
        <position position="54"/>
    </location>
</feature>
<feature type="disulfide bond" evidence="3">
    <location>
        <begin position="25"/>
        <end position="143"/>
    </location>
</feature>
<feature type="disulfide bond" evidence="3">
    <location>
        <begin position="49"/>
        <end position="130"/>
    </location>
</feature>
<feature type="disulfide bond" evidence="3">
    <location>
        <begin position="84"/>
        <end position="95"/>
    </location>
</feature>
<feature type="disulfide bond" evidence="3">
    <location>
        <begin position="91"/>
        <end position="109"/>
    </location>
</feature>
<keyword id="KW-0966">Cell projection</keyword>
<keyword id="KW-0969">Cilium</keyword>
<keyword id="KW-0968">Cytoplasmic vesicle</keyword>
<keyword id="KW-1015">Disulfide bond</keyword>
<keyword id="KW-0278">Fertilization</keyword>
<keyword id="KW-0282">Flagellum</keyword>
<keyword id="KW-1185">Reference proteome</keyword>
<keyword id="KW-0964">Secreted</keyword>
<keyword id="KW-0732">Signal</keyword>
<reference key="1">
    <citation type="journal article" date="2011" name="PLoS ONE">
        <title>Characterization of a novel lysozyme-like 4 gene in the rat.</title>
        <authorList>
            <person name="Narmadha G."/>
            <person name="Muneswararao K."/>
            <person name="Rajesh A."/>
            <person name="Yenugu S."/>
        </authorList>
    </citation>
    <scope>NUCLEOTIDE SEQUENCE [MRNA]</scope>
    <scope>TISSUE SPECIFICITY</scope>
    <scope>DEVELOPMENTAL STAGE</scope>
    <scope>SUBCELLULAR LOCATION</scope>
    <scope>ABSENCE OF BACTERIOLYTIC AND LYSOZYME ACTIVITIES</scope>
    <source>
        <strain>Wistar</strain>
        <tissue>Epididymis</tissue>
    </source>
</reference>
<reference key="2">
    <citation type="journal article" date="2004" name="Nature">
        <title>Genome sequence of the Brown Norway rat yields insights into mammalian evolution.</title>
        <authorList>
            <person name="Gibbs R.A."/>
            <person name="Weinstock G.M."/>
            <person name="Metzker M.L."/>
            <person name="Muzny D.M."/>
            <person name="Sodergren E.J."/>
            <person name="Scherer S."/>
            <person name="Scott G."/>
            <person name="Steffen D."/>
            <person name="Worley K.C."/>
            <person name="Burch P.E."/>
            <person name="Okwuonu G."/>
            <person name="Hines S."/>
            <person name="Lewis L."/>
            <person name="Deramo C."/>
            <person name="Delgado O."/>
            <person name="Dugan-Rocha S."/>
            <person name="Miner G."/>
            <person name="Morgan M."/>
            <person name="Hawes A."/>
            <person name="Gill R."/>
            <person name="Holt R.A."/>
            <person name="Adams M.D."/>
            <person name="Amanatides P.G."/>
            <person name="Baden-Tillson H."/>
            <person name="Barnstead M."/>
            <person name="Chin S."/>
            <person name="Evans C.A."/>
            <person name="Ferriera S."/>
            <person name="Fosler C."/>
            <person name="Glodek A."/>
            <person name="Gu Z."/>
            <person name="Jennings D."/>
            <person name="Kraft C.L."/>
            <person name="Nguyen T."/>
            <person name="Pfannkoch C.M."/>
            <person name="Sitter C."/>
            <person name="Sutton G.G."/>
            <person name="Venter J.C."/>
            <person name="Woodage T."/>
            <person name="Smith D."/>
            <person name="Lee H.-M."/>
            <person name="Gustafson E."/>
            <person name="Cahill P."/>
            <person name="Kana A."/>
            <person name="Doucette-Stamm L."/>
            <person name="Weinstock K."/>
            <person name="Fechtel K."/>
            <person name="Weiss R.B."/>
            <person name="Dunn D.M."/>
            <person name="Green E.D."/>
            <person name="Blakesley R.W."/>
            <person name="Bouffard G.G."/>
            <person name="De Jong P.J."/>
            <person name="Osoegawa K."/>
            <person name="Zhu B."/>
            <person name="Marra M."/>
            <person name="Schein J."/>
            <person name="Bosdet I."/>
            <person name="Fjell C."/>
            <person name="Jones S."/>
            <person name="Krzywinski M."/>
            <person name="Mathewson C."/>
            <person name="Siddiqui A."/>
            <person name="Wye N."/>
            <person name="McPherson J."/>
            <person name="Zhao S."/>
            <person name="Fraser C.M."/>
            <person name="Shetty J."/>
            <person name="Shatsman S."/>
            <person name="Geer K."/>
            <person name="Chen Y."/>
            <person name="Abramzon S."/>
            <person name="Nierman W.C."/>
            <person name="Havlak P.H."/>
            <person name="Chen R."/>
            <person name="Durbin K.J."/>
            <person name="Egan A."/>
            <person name="Ren Y."/>
            <person name="Song X.-Z."/>
            <person name="Li B."/>
            <person name="Liu Y."/>
            <person name="Qin X."/>
            <person name="Cawley S."/>
            <person name="Cooney A.J."/>
            <person name="D'Souza L.M."/>
            <person name="Martin K."/>
            <person name="Wu J.Q."/>
            <person name="Gonzalez-Garay M.L."/>
            <person name="Jackson A.R."/>
            <person name="Kalafus K.J."/>
            <person name="McLeod M.P."/>
            <person name="Milosavljevic A."/>
            <person name="Virk D."/>
            <person name="Volkov A."/>
            <person name="Wheeler D.A."/>
            <person name="Zhang Z."/>
            <person name="Bailey J.A."/>
            <person name="Eichler E.E."/>
            <person name="Tuzun E."/>
            <person name="Birney E."/>
            <person name="Mongin E."/>
            <person name="Ureta-Vidal A."/>
            <person name="Woodwark C."/>
            <person name="Zdobnov E."/>
            <person name="Bork P."/>
            <person name="Suyama M."/>
            <person name="Torrents D."/>
            <person name="Alexandersson M."/>
            <person name="Trask B.J."/>
            <person name="Young J.M."/>
            <person name="Huang H."/>
            <person name="Wang H."/>
            <person name="Xing H."/>
            <person name="Daniels S."/>
            <person name="Gietzen D."/>
            <person name="Schmidt J."/>
            <person name="Stevens K."/>
            <person name="Vitt U."/>
            <person name="Wingrove J."/>
            <person name="Camara F."/>
            <person name="Mar Alba M."/>
            <person name="Abril J.F."/>
            <person name="Guigo R."/>
            <person name="Smit A."/>
            <person name="Dubchak I."/>
            <person name="Rubin E.M."/>
            <person name="Couronne O."/>
            <person name="Poliakov A."/>
            <person name="Huebner N."/>
            <person name="Ganten D."/>
            <person name="Goesele C."/>
            <person name="Hummel O."/>
            <person name="Kreitler T."/>
            <person name="Lee Y.-A."/>
            <person name="Monti J."/>
            <person name="Schulz H."/>
            <person name="Zimdahl H."/>
            <person name="Himmelbauer H."/>
            <person name="Lehrach H."/>
            <person name="Jacob H.J."/>
            <person name="Bromberg S."/>
            <person name="Gullings-Handley J."/>
            <person name="Jensen-Seaman M.I."/>
            <person name="Kwitek A.E."/>
            <person name="Lazar J."/>
            <person name="Pasko D."/>
            <person name="Tonellato P.J."/>
            <person name="Twigger S."/>
            <person name="Ponting C.P."/>
            <person name="Duarte J.M."/>
            <person name="Rice S."/>
            <person name="Goodstadt L."/>
            <person name="Beatson S.A."/>
            <person name="Emes R.D."/>
            <person name="Winter E.E."/>
            <person name="Webber C."/>
            <person name="Brandt P."/>
            <person name="Nyakatura G."/>
            <person name="Adetobi M."/>
            <person name="Chiaromonte F."/>
            <person name="Elnitski L."/>
            <person name="Eswara P."/>
            <person name="Hardison R.C."/>
            <person name="Hou M."/>
            <person name="Kolbe D."/>
            <person name="Makova K."/>
            <person name="Miller W."/>
            <person name="Nekrutenko A."/>
            <person name="Riemer C."/>
            <person name="Schwartz S."/>
            <person name="Taylor J."/>
            <person name="Yang S."/>
            <person name="Zhang Y."/>
            <person name="Lindpaintner K."/>
            <person name="Andrews T.D."/>
            <person name="Caccamo M."/>
            <person name="Clamp M."/>
            <person name="Clarke L."/>
            <person name="Curwen V."/>
            <person name="Durbin R.M."/>
            <person name="Eyras E."/>
            <person name="Searle S.M."/>
            <person name="Cooper G.M."/>
            <person name="Batzoglou S."/>
            <person name="Brudno M."/>
            <person name="Sidow A."/>
            <person name="Stone E.A."/>
            <person name="Payseur B.A."/>
            <person name="Bourque G."/>
            <person name="Lopez-Otin C."/>
            <person name="Puente X.S."/>
            <person name="Chakrabarti K."/>
            <person name="Chatterji S."/>
            <person name="Dewey C."/>
            <person name="Pachter L."/>
            <person name="Bray N."/>
            <person name="Yap V.B."/>
            <person name="Caspi A."/>
            <person name="Tesler G."/>
            <person name="Pevzner P.A."/>
            <person name="Haussler D."/>
            <person name="Roskin K.M."/>
            <person name="Baertsch R."/>
            <person name="Clawson H."/>
            <person name="Furey T.S."/>
            <person name="Hinrichs A.S."/>
            <person name="Karolchik D."/>
            <person name="Kent W.J."/>
            <person name="Rosenbloom K.R."/>
            <person name="Trumbower H."/>
            <person name="Weirauch M."/>
            <person name="Cooper D.N."/>
            <person name="Stenson P.D."/>
            <person name="Ma B."/>
            <person name="Brent M."/>
            <person name="Arumugam M."/>
            <person name="Shteynberg D."/>
            <person name="Copley R.R."/>
            <person name="Taylor M.S."/>
            <person name="Riethman H."/>
            <person name="Mudunuri U."/>
            <person name="Peterson J."/>
            <person name="Guyer M."/>
            <person name="Felsenfeld A."/>
            <person name="Old S."/>
            <person name="Mockrin S."/>
            <person name="Collins F.S."/>
        </authorList>
    </citation>
    <scope>NUCLEOTIDE SEQUENCE [LARGE SCALE GENOMIC DNA]</scope>
    <source>
        <strain>Brown Norway</strain>
    </source>
</reference>
<reference key="3">
    <citation type="submission" date="2005-09" db="EMBL/GenBank/DDBJ databases">
        <authorList>
            <person name="Mural R.J."/>
            <person name="Adams M.D."/>
            <person name="Myers E.W."/>
            <person name="Smith H.O."/>
            <person name="Venter J.C."/>
        </authorList>
    </citation>
    <scope>NUCLEOTIDE SEQUENCE [LARGE SCALE GENOMIC DNA]</scope>
</reference>
<reference key="4">
    <citation type="journal article" date="2016" name="Data Brief">
        <title>Curated eutherian third party data gene data sets.</title>
        <authorList>
            <person name="Premzl M."/>
        </authorList>
    </citation>
    <scope>IDENTIFICATION</scope>
</reference>
<name>LYZL4_RAT</name>
<comment type="function">
    <text evidence="1 4">May be involved in fertilization (By similarity). Has no detectable bacteriolytic and lysozyme activities in vitro (PubMed:22110709).</text>
</comment>
<comment type="subunit">
    <text evidence="1">Monomer.</text>
</comment>
<comment type="subcellular location">
    <subcellularLocation>
        <location evidence="1">Secreted</location>
    </subcellularLocation>
    <subcellularLocation>
        <location evidence="1">Cytoplasmic vesicle</location>
        <location evidence="1">Secretory vesicle</location>
        <location evidence="1">Acrosome</location>
    </subcellularLocation>
    <subcellularLocation>
        <location evidence="4">Cell projection</location>
        <location evidence="4">Cilium</location>
        <location evidence="4">Flagellum</location>
    </subcellularLocation>
    <text evidence="1 4">Found in the principal piece of sperm tail.</text>
</comment>
<comment type="tissue specificity">
    <text evidence="4">Expressed in the brain, lung, ovary, uterus and testis (PubMed:22110709). In testis expressed in the germinal epithelium and on the maturing spermatozoa (at protein level) (PubMed:22110709).</text>
</comment>
<comment type="developmental stage">
    <text evidence="4">Present during stages of postnatal development from 10 to 60 days old (PubMed:22110709).</text>
</comment>
<comment type="similarity">
    <text evidence="3">Belongs to the glycosyl hydrolase 22 family.</text>
</comment>
<comment type="caution">
    <text evidence="6">Although it belongs to the glycosyl hydrolase 22 family, Gly-72 is present instead of the conserved Asp which is an active site residue. It is therefore expected that this protein lacks hydrolase activity.</text>
</comment>
<accession>D4ABW7</accession>